<organism>
    <name type="scientific">Salmonella choleraesuis (strain SC-B67)</name>
    <dbReference type="NCBI Taxonomy" id="321314"/>
    <lineage>
        <taxon>Bacteria</taxon>
        <taxon>Pseudomonadati</taxon>
        <taxon>Pseudomonadota</taxon>
        <taxon>Gammaproteobacteria</taxon>
        <taxon>Enterobacterales</taxon>
        <taxon>Enterobacteriaceae</taxon>
        <taxon>Salmonella</taxon>
    </lineage>
</organism>
<comment type="function">
    <text evidence="1">Associates with the EF-Tu.GDP complex and induces the exchange of GDP to GTP. It remains bound to the aminoacyl-tRNA.EF-Tu.GTP complex up to the GTP hydrolysis stage on the ribosome.</text>
</comment>
<comment type="subcellular location">
    <subcellularLocation>
        <location evidence="1">Cytoplasm</location>
    </subcellularLocation>
</comment>
<comment type="similarity">
    <text evidence="1">Belongs to the EF-Ts family.</text>
</comment>
<comment type="sequence caution" evidence="2">
    <conflict type="erroneous initiation">
        <sequence resource="EMBL-CDS" id="AAX64123"/>
    </conflict>
</comment>
<name>EFTS_SALCH</name>
<keyword id="KW-0963">Cytoplasm</keyword>
<keyword id="KW-0251">Elongation factor</keyword>
<keyword id="KW-0648">Protein biosynthesis</keyword>
<reference key="1">
    <citation type="journal article" date="2005" name="Nucleic Acids Res.">
        <title>The genome sequence of Salmonella enterica serovar Choleraesuis, a highly invasive and resistant zoonotic pathogen.</title>
        <authorList>
            <person name="Chiu C.-H."/>
            <person name="Tang P."/>
            <person name="Chu C."/>
            <person name="Hu S."/>
            <person name="Bao Q."/>
            <person name="Yu J."/>
            <person name="Chou Y.-Y."/>
            <person name="Wang H.-S."/>
            <person name="Lee Y.-S."/>
        </authorList>
    </citation>
    <scope>NUCLEOTIDE SEQUENCE [LARGE SCALE GENOMIC DNA]</scope>
    <source>
        <strain>SC-B67</strain>
    </source>
</reference>
<evidence type="ECO:0000255" key="1">
    <source>
        <dbReference type="HAMAP-Rule" id="MF_00050"/>
    </source>
</evidence>
<evidence type="ECO:0000305" key="2"/>
<protein>
    <recommendedName>
        <fullName evidence="1">Elongation factor Ts</fullName>
        <shortName evidence="1">EF-Ts</shortName>
    </recommendedName>
</protein>
<feature type="chain" id="PRO_0000241525" description="Elongation factor Ts">
    <location>
        <begin position="1"/>
        <end position="283"/>
    </location>
</feature>
<feature type="region of interest" description="Involved in Mg(2+) ion dislocation from EF-Tu" evidence="1">
    <location>
        <begin position="80"/>
        <end position="83"/>
    </location>
</feature>
<dbReference type="EMBL" id="AE017220">
    <property type="protein sequence ID" value="AAX64123.1"/>
    <property type="status" value="ALT_INIT"/>
    <property type="molecule type" value="Genomic_DNA"/>
</dbReference>
<dbReference type="RefSeq" id="WP_000808106.1">
    <property type="nucleotide sequence ID" value="NC_006905.1"/>
</dbReference>
<dbReference type="SMR" id="Q57T38"/>
<dbReference type="KEGG" id="sec:SCH_0217"/>
<dbReference type="HOGENOM" id="CLU_047155_0_2_6"/>
<dbReference type="Proteomes" id="UP000000538">
    <property type="component" value="Chromosome"/>
</dbReference>
<dbReference type="GO" id="GO:0005737">
    <property type="term" value="C:cytoplasm"/>
    <property type="evidence" value="ECO:0007669"/>
    <property type="project" value="UniProtKB-SubCell"/>
</dbReference>
<dbReference type="GO" id="GO:0003746">
    <property type="term" value="F:translation elongation factor activity"/>
    <property type="evidence" value="ECO:0007669"/>
    <property type="project" value="UniProtKB-UniRule"/>
</dbReference>
<dbReference type="CDD" id="cd14275">
    <property type="entry name" value="UBA_EF-Ts"/>
    <property type="match status" value="1"/>
</dbReference>
<dbReference type="FunFam" id="1.10.286.20:FF:000001">
    <property type="entry name" value="Elongation factor Ts"/>
    <property type="match status" value="1"/>
</dbReference>
<dbReference type="FunFam" id="1.10.8.10:FF:000001">
    <property type="entry name" value="Elongation factor Ts"/>
    <property type="match status" value="1"/>
</dbReference>
<dbReference type="FunFam" id="3.30.479.20:FF:000001">
    <property type="entry name" value="Elongation factor Ts"/>
    <property type="match status" value="1"/>
</dbReference>
<dbReference type="Gene3D" id="1.10.286.20">
    <property type="match status" value="1"/>
</dbReference>
<dbReference type="Gene3D" id="1.10.8.10">
    <property type="entry name" value="DNA helicase RuvA subunit, C-terminal domain"/>
    <property type="match status" value="1"/>
</dbReference>
<dbReference type="Gene3D" id="3.30.479.20">
    <property type="entry name" value="Elongation factor Ts, dimerisation domain"/>
    <property type="match status" value="2"/>
</dbReference>
<dbReference type="HAMAP" id="MF_00050">
    <property type="entry name" value="EF_Ts"/>
    <property type="match status" value="1"/>
</dbReference>
<dbReference type="InterPro" id="IPR036402">
    <property type="entry name" value="EF-Ts_dimer_sf"/>
</dbReference>
<dbReference type="InterPro" id="IPR001816">
    <property type="entry name" value="Transl_elong_EFTs/EF1B"/>
</dbReference>
<dbReference type="InterPro" id="IPR014039">
    <property type="entry name" value="Transl_elong_EFTs/EF1B_dimer"/>
</dbReference>
<dbReference type="InterPro" id="IPR018101">
    <property type="entry name" value="Transl_elong_Ts_CS"/>
</dbReference>
<dbReference type="InterPro" id="IPR009060">
    <property type="entry name" value="UBA-like_sf"/>
</dbReference>
<dbReference type="NCBIfam" id="TIGR00116">
    <property type="entry name" value="tsf"/>
    <property type="match status" value="1"/>
</dbReference>
<dbReference type="PANTHER" id="PTHR11741">
    <property type="entry name" value="ELONGATION FACTOR TS"/>
    <property type="match status" value="1"/>
</dbReference>
<dbReference type="PANTHER" id="PTHR11741:SF0">
    <property type="entry name" value="ELONGATION FACTOR TS, MITOCHONDRIAL"/>
    <property type="match status" value="1"/>
</dbReference>
<dbReference type="Pfam" id="PF00889">
    <property type="entry name" value="EF_TS"/>
    <property type="match status" value="1"/>
</dbReference>
<dbReference type="SUPFAM" id="SSF54713">
    <property type="entry name" value="Elongation factor Ts (EF-Ts), dimerisation domain"/>
    <property type="match status" value="2"/>
</dbReference>
<dbReference type="SUPFAM" id="SSF46934">
    <property type="entry name" value="UBA-like"/>
    <property type="match status" value="1"/>
</dbReference>
<dbReference type="PROSITE" id="PS01126">
    <property type="entry name" value="EF_TS_1"/>
    <property type="match status" value="1"/>
</dbReference>
<dbReference type="PROSITE" id="PS01127">
    <property type="entry name" value="EF_TS_2"/>
    <property type="match status" value="1"/>
</dbReference>
<gene>
    <name evidence="1" type="primary">tsf</name>
    <name type="ordered locus">SCH_0217</name>
</gene>
<sequence length="283" mass="30358">MAEITASLVKELRERTGAGMMDCKKALTEANGDIELAIENMRKSGAIKAAKKAGNVAADGVIKTKIDGNVAFILEVNCQTDFVAKDAGFQAFADKVLDAAVAGKITDVEVLKAQFEEERVALVAKIGENINIRRVASLEGDVLGSYQHGARIGVLVAAKGADEELVKQLAMHVAASKPEFVKPEDVSADVVEKEYQVQLDIAMQSGKPKEIAEKMVEGRMKKFTGEVSLTGQPFVMEPSKSVGQLLKEHNADVTGFIRFEVGEGIEKVETDFAAEVAAMSKQS</sequence>
<accession>Q57T38</accession>
<proteinExistence type="inferred from homology"/>